<dbReference type="EC" id="2.7.7.6" evidence="1"/>
<dbReference type="EMBL" id="FM211187">
    <property type="protein sequence ID" value="CAR67994.1"/>
    <property type="molecule type" value="Genomic_DNA"/>
</dbReference>
<dbReference type="RefSeq" id="WP_000639577.1">
    <property type="nucleotide sequence ID" value="NC_011900.1"/>
</dbReference>
<dbReference type="SMR" id="B8ZK08"/>
<dbReference type="KEGG" id="sne:SPN23F01360"/>
<dbReference type="HOGENOM" id="CLU_187518_0_0_9"/>
<dbReference type="GO" id="GO:0000428">
    <property type="term" value="C:DNA-directed RNA polymerase complex"/>
    <property type="evidence" value="ECO:0007669"/>
    <property type="project" value="UniProtKB-KW"/>
</dbReference>
<dbReference type="GO" id="GO:0003677">
    <property type="term" value="F:DNA binding"/>
    <property type="evidence" value="ECO:0007669"/>
    <property type="project" value="UniProtKB-UniRule"/>
</dbReference>
<dbReference type="GO" id="GO:0003899">
    <property type="term" value="F:DNA-directed RNA polymerase activity"/>
    <property type="evidence" value="ECO:0007669"/>
    <property type="project" value="UniProtKB-UniRule"/>
</dbReference>
<dbReference type="GO" id="GO:0006351">
    <property type="term" value="P:DNA-templated transcription"/>
    <property type="evidence" value="ECO:0007669"/>
    <property type="project" value="UniProtKB-UniRule"/>
</dbReference>
<dbReference type="Gene3D" id="3.10.20.730">
    <property type="entry name" value="RNAP, epsilon subunit-like"/>
    <property type="match status" value="1"/>
</dbReference>
<dbReference type="HAMAP" id="MF_01553">
    <property type="entry name" value="RNApol_bact_RpoY"/>
    <property type="match status" value="1"/>
</dbReference>
<dbReference type="InterPro" id="IPR009907">
    <property type="entry name" value="RpoY"/>
</dbReference>
<dbReference type="NCBIfam" id="NF010188">
    <property type="entry name" value="PRK13667.1"/>
    <property type="match status" value="1"/>
</dbReference>
<dbReference type="Pfam" id="PF07288">
    <property type="entry name" value="RpoY"/>
    <property type="match status" value="1"/>
</dbReference>
<accession>B8ZK08</accession>
<proteinExistence type="inferred from homology"/>
<sequence>MIYKVFYQETKERSPRRETTRALYLDIDASSELEGRITARQLVEENRPEYNIEYIELLSDKLLDYEKETGAFEITEF</sequence>
<name>RPOY_STRPJ</name>
<comment type="function">
    <text evidence="1">A non-essential component of RNA polymerase (RNAP).</text>
</comment>
<comment type="catalytic activity">
    <reaction evidence="1">
        <text>RNA(n) + a ribonucleoside 5'-triphosphate = RNA(n+1) + diphosphate</text>
        <dbReference type="Rhea" id="RHEA:21248"/>
        <dbReference type="Rhea" id="RHEA-COMP:14527"/>
        <dbReference type="Rhea" id="RHEA-COMP:17342"/>
        <dbReference type="ChEBI" id="CHEBI:33019"/>
        <dbReference type="ChEBI" id="CHEBI:61557"/>
        <dbReference type="ChEBI" id="CHEBI:140395"/>
        <dbReference type="EC" id="2.7.7.6"/>
    </reaction>
</comment>
<comment type="subunit">
    <text evidence="1">RNAP is composed of a core of 2 alpha, a beta and a beta' subunit. The core is associated with a delta subunit, and at least one of epsilon or omega. When a sigma factor is associated with the core the holoenzyme is formed, which can initiate transcription.</text>
</comment>
<comment type="similarity">
    <text evidence="1">Belongs to the RNA polymerase subunit epsilon family.</text>
</comment>
<protein>
    <recommendedName>
        <fullName evidence="1">DNA-directed RNA polymerase subunit epsilon</fullName>
        <shortName evidence="1">RNAP epsilon subunit</shortName>
        <ecNumber evidence="1">2.7.7.6</ecNumber>
    </recommendedName>
    <alternativeName>
        <fullName evidence="1">RNA polymerase epsilon subunit</fullName>
    </alternativeName>
    <alternativeName>
        <fullName evidence="1">Transcriptase subunit epsilon</fullName>
    </alternativeName>
</protein>
<gene>
    <name evidence="1" type="primary">rpoY</name>
    <name type="ordered locus">SPN23F01360</name>
</gene>
<reference key="1">
    <citation type="journal article" date="2009" name="J. Bacteriol.">
        <title>Role of conjugative elements in the evolution of the multidrug-resistant pandemic clone Streptococcus pneumoniae Spain23F ST81.</title>
        <authorList>
            <person name="Croucher N.J."/>
            <person name="Walker D."/>
            <person name="Romero P."/>
            <person name="Lennard N."/>
            <person name="Paterson G.K."/>
            <person name="Bason N.C."/>
            <person name="Mitchell A.M."/>
            <person name="Quail M.A."/>
            <person name="Andrew P.W."/>
            <person name="Parkhill J."/>
            <person name="Bentley S.D."/>
            <person name="Mitchell T.J."/>
        </authorList>
    </citation>
    <scope>NUCLEOTIDE SEQUENCE [LARGE SCALE GENOMIC DNA]</scope>
    <source>
        <strain>ATCC 700669 / Spain 23F-1</strain>
    </source>
</reference>
<feature type="chain" id="PRO_1000185338" description="DNA-directed RNA polymerase subunit epsilon">
    <location>
        <begin position="1"/>
        <end position="77"/>
    </location>
</feature>
<organism>
    <name type="scientific">Streptococcus pneumoniae (strain ATCC 700669 / Spain 23F-1)</name>
    <dbReference type="NCBI Taxonomy" id="561276"/>
    <lineage>
        <taxon>Bacteria</taxon>
        <taxon>Bacillati</taxon>
        <taxon>Bacillota</taxon>
        <taxon>Bacilli</taxon>
        <taxon>Lactobacillales</taxon>
        <taxon>Streptococcaceae</taxon>
        <taxon>Streptococcus</taxon>
    </lineage>
</organism>
<keyword id="KW-0240">DNA-directed RNA polymerase</keyword>
<keyword id="KW-0548">Nucleotidyltransferase</keyword>
<keyword id="KW-0804">Transcription</keyword>
<keyword id="KW-0808">Transferase</keyword>
<evidence type="ECO:0000255" key="1">
    <source>
        <dbReference type="HAMAP-Rule" id="MF_01553"/>
    </source>
</evidence>